<comment type="function">
    <text evidence="1">With S4 and S12 plays an important role in translational accuracy.</text>
</comment>
<comment type="function">
    <text evidence="1">Located at the back of the 30S subunit body where it stabilizes the conformation of the head with respect to the body.</text>
</comment>
<comment type="subunit">
    <text evidence="1">Part of the 30S ribosomal subunit. Contacts proteins S4 and S8.</text>
</comment>
<comment type="domain">
    <text>The N-terminal domain interacts with the head of the 30S subunit; the C-terminal domain interacts with the body and contacts protein S4. The interaction surface between S4 and S5 is involved in control of translational fidelity.</text>
</comment>
<comment type="similarity">
    <text evidence="1">Belongs to the universal ribosomal protein uS5 family.</text>
</comment>
<sequence>MAQERRPQREDRQSREERDSEFVDKLVAINRVAKVVKGGRRFGFAALVVVGDQKGRVGFGHGKAREVPEAIRKATEAAKRELIFVPLRDGRTLHHDVHGRHGAGKVLLRSAKVGTGIIAGGPMRAVFETLGMHDVVAKSTGSSNPYNMVRATFDALKHQVHPKDIAAQRGIKYATLQARRSASGNASEE</sequence>
<evidence type="ECO:0000255" key="1">
    <source>
        <dbReference type="HAMAP-Rule" id="MF_01307"/>
    </source>
</evidence>
<evidence type="ECO:0000305" key="2"/>
<proteinExistence type="inferred from homology"/>
<accession>B3PWT8</accession>
<name>RS5_RHIE6</name>
<organism>
    <name type="scientific">Rhizobium etli (strain CIAT 652)</name>
    <dbReference type="NCBI Taxonomy" id="491916"/>
    <lineage>
        <taxon>Bacteria</taxon>
        <taxon>Pseudomonadati</taxon>
        <taxon>Pseudomonadota</taxon>
        <taxon>Alphaproteobacteria</taxon>
        <taxon>Hyphomicrobiales</taxon>
        <taxon>Rhizobiaceae</taxon>
        <taxon>Rhizobium/Agrobacterium group</taxon>
        <taxon>Rhizobium</taxon>
    </lineage>
</organism>
<feature type="chain" id="PRO_1000140888" description="Small ribosomal subunit protein uS5">
    <location>
        <begin position="1"/>
        <end position="189"/>
    </location>
</feature>
<feature type="domain" description="S5 DRBM" evidence="1">
    <location>
        <begin position="22"/>
        <end position="85"/>
    </location>
</feature>
<dbReference type="EMBL" id="CP001074">
    <property type="protein sequence ID" value="ACE90736.1"/>
    <property type="molecule type" value="Genomic_DNA"/>
</dbReference>
<dbReference type="SMR" id="B3PWT8"/>
<dbReference type="KEGG" id="rec:RHECIAT_CH0001766"/>
<dbReference type="eggNOG" id="COG0098">
    <property type="taxonomic scope" value="Bacteria"/>
</dbReference>
<dbReference type="HOGENOM" id="CLU_065898_2_2_5"/>
<dbReference type="Proteomes" id="UP000008817">
    <property type="component" value="Chromosome"/>
</dbReference>
<dbReference type="GO" id="GO:0015935">
    <property type="term" value="C:small ribosomal subunit"/>
    <property type="evidence" value="ECO:0007669"/>
    <property type="project" value="InterPro"/>
</dbReference>
<dbReference type="GO" id="GO:0019843">
    <property type="term" value="F:rRNA binding"/>
    <property type="evidence" value="ECO:0007669"/>
    <property type="project" value="UniProtKB-UniRule"/>
</dbReference>
<dbReference type="GO" id="GO:0003735">
    <property type="term" value="F:structural constituent of ribosome"/>
    <property type="evidence" value="ECO:0007669"/>
    <property type="project" value="InterPro"/>
</dbReference>
<dbReference type="GO" id="GO:0006412">
    <property type="term" value="P:translation"/>
    <property type="evidence" value="ECO:0007669"/>
    <property type="project" value="UniProtKB-UniRule"/>
</dbReference>
<dbReference type="FunFam" id="3.30.160.20:FF:000001">
    <property type="entry name" value="30S ribosomal protein S5"/>
    <property type="match status" value="1"/>
</dbReference>
<dbReference type="FunFam" id="3.30.230.10:FF:000002">
    <property type="entry name" value="30S ribosomal protein S5"/>
    <property type="match status" value="1"/>
</dbReference>
<dbReference type="Gene3D" id="3.30.160.20">
    <property type="match status" value="1"/>
</dbReference>
<dbReference type="Gene3D" id="3.30.230.10">
    <property type="match status" value="1"/>
</dbReference>
<dbReference type="HAMAP" id="MF_01307_B">
    <property type="entry name" value="Ribosomal_uS5_B"/>
    <property type="match status" value="1"/>
</dbReference>
<dbReference type="InterPro" id="IPR020568">
    <property type="entry name" value="Ribosomal_Su5_D2-typ_SF"/>
</dbReference>
<dbReference type="InterPro" id="IPR000851">
    <property type="entry name" value="Ribosomal_uS5"/>
</dbReference>
<dbReference type="InterPro" id="IPR005712">
    <property type="entry name" value="Ribosomal_uS5_bac-type"/>
</dbReference>
<dbReference type="InterPro" id="IPR005324">
    <property type="entry name" value="Ribosomal_uS5_C"/>
</dbReference>
<dbReference type="InterPro" id="IPR013810">
    <property type="entry name" value="Ribosomal_uS5_N"/>
</dbReference>
<dbReference type="InterPro" id="IPR018192">
    <property type="entry name" value="Ribosomal_uS5_N_CS"/>
</dbReference>
<dbReference type="InterPro" id="IPR014721">
    <property type="entry name" value="Ribsml_uS5_D2-typ_fold_subgr"/>
</dbReference>
<dbReference type="NCBIfam" id="TIGR01021">
    <property type="entry name" value="rpsE_bact"/>
    <property type="match status" value="1"/>
</dbReference>
<dbReference type="PANTHER" id="PTHR48277">
    <property type="entry name" value="MITOCHONDRIAL RIBOSOMAL PROTEIN S5"/>
    <property type="match status" value="1"/>
</dbReference>
<dbReference type="PANTHER" id="PTHR48277:SF1">
    <property type="entry name" value="MITOCHONDRIAL RIBOSOMAL PROTEIN S5"/>
    <property type="match status" value="1"/>
</dbReference>
<dbReference type="Pfam" id="PF00333">
    <property type="entry name" value="Ribosomal_S5"/>
    <property type="match status" value="1"/>
</dbReference>
<dbReference type="Pfam" id="PF03719">
    <property type="entry name" value="Ribosomal_S5_C"/>
    <property type="match status" value="1"/>
</dbReference>
<dbReference type="SUPFAM" id="SSF54768">
    <property type="entry name" value="dsRNA-binding domain-like"/>
    <property type="match status" value="1"/>
</dbReference>
<dbReference type="SUPFAM" id="SSF54211">
    <property type="entry name" value="Ribosomal protein S5 domain 2-like"/>
    <property type="match status" value="1"/>
</dbReference>
<dbReference type="PROSITE" id="PS00585">
    <property type="entry name" value="RIBOSOMAL_S5"/>
    <property type="match status" value="1"/>
</dbReference>
<dbReference type="PROSITE" id="PS50881">
    <property type="entry name" value="S5_DSRBD"/>
    <property type="match status" value="1"/>
</dbReference>
<protein>
    <recommendedName>
        <fullName evidence="1">Small ribosomal subunit protein uS5</fullName>
    </recommendedName>
    <alternativeName>
        <fullName evidence="2">30S ribosomal protein S5</fullName>
    </alternativeName>
</protein>
<reference key="1">
    <citation type="journal article" date="2010" name="Appl. Environ. Microbiol.">
        <title>Conserved symbiotic plasmid DNA sequences in the multireplicon pangenomic structure of Rhizobium etli.</title>
        <authorList>
            <person name="Gonzalez V."/>
            <person name="Acosta J.L."/>
            <person name="Santamaria R.I."/>
            <person name="Bustos P."/>
            <person name="Fernandez J.L."/>
            <person name="Hernandez Gonzalez I.L."/>
            <person name="Diaz R."/>
            <person name="Flores M."/>
            <person name="Palacios R."/>
            <person name="Mora J."/>
            <person name="Davila G."/>
        </authorList>
    </citation>
    <scope>NUCLEOTIDE SEQUENCE [LARGE SCALE GENOMIC DNA]</scope>
    <source>
        <strain>CIAT 652</strain>
    </source>
</reference>
<gene>
    <name evidence="1" type="primary">rpsE</name>
    <name type="ordered locus">RHECIAT_CH0001766</name>
</gene>
<keyword id="KW-0687">Ribonucleoprotein</keyword>
<keyword id="KW-0689">Ribosomal protein</keyword>
<keyword id="KW-0694">RNA-binding</keyword>
<keyword id="KW-0699">rRNA-binding</keyword>